<feature type="chain" id="PRO_1000019522" description="Homogentisate 1,2-dioxygenase">
    <location>
        <begin position="1"/>
        <end position="444"/>
    </location>
</feature>
<feature type="active site" description="Proton acceptor" evidence="1">
    <location>
        <position position="298"/>
    </location>
</feature>
<feature type="binding site" evidence="1">
    <location>
        <position position="341"/>
    </location>
    <ligand>
        <name>Fe cation</name>
        <dbReference type="ChEBI" id="CHEBI:24875"/>
    </ligand>
</feature>
<feature type="binding site" evidence="1">
    <location>
        <position position="347"/>
    </location>
    <ligand>
        <name>Fe cation</name>
        <dbReference type="ChEBI" id="CHEBI:24875"/>
    </ligand>
</feature>
<feature type="binding site" evidence="1">
    <location>
        <position position="356"/>
    </location>
    <ligand>
        <name>homogentisate</name>
        <dbReference type="ChEBI" id="CHEBI:16169"/>
    </ligand>
</feature>
<feature type="binding site" evidence="1">
    <location>
        <position position="377"/>
    </location>
    <ligand>
        <name>Fe cation</name>
        <dbReference type="ChEBI" id="CHEBI:24875"/>
    </ligand>
</feature>
<feature type="binding site" evidence="1">
    <location>
        <position position="377"/>
    </location>
    <ligand>
        <name>homogentisate</name>
        <dbReference type="ChEBI" id="CHEBI:16169"/>
    </ligand>
</feature>
<sequence>MTLDLSKPATAGYLSGFANEFATEALPGALPHGRNSPQRAPYGLYAEQLSGTAFTAPRGHNRRSWLYRIRPAAVHRPFEPYAGAQRLVSEFGDSADVPPTPPNQLRWDPLPMPVEPTDFVDGLVTMAGNGSAAAMNGCAIHLYAANRSMQDRFFYSADGELLIVPQQGRLFIATEFGRLDVEPFEIAVIPRGVRFAVALPDGNARGYICENFGALLRLPDLGPIGSNGLANPRDFLTPQAAYEDREGAFELIAKLNGRLWRADIGHSPLDVVAWHGNYAPYKYDLRLFNTIGSISFDHPDPSIFLVLQAQSDTPGVDTIDFVIFPPRWLAAEDTFRPPWFHRNVASEFMGLVHGAYDAKAEGFVPGGASLHNCMSGHGPDADTFEKASASDTTKPHKVDATMAFMFETRTLIRPTRYALDTAQLQADYFECWQGIKKHFNPEQR</sequence>
<reference key="1">
    <citation type="submission" date="2006-08" db="EMBL/GenBank/DDBJ databases">
        <title>Complete sequence of chromosome 1 of Burkholderia cenocepacia HI2424.</title>
        <authorList>
            <person name="Copeland A."/>
            <person name="Lucas S."/>
            <person name="Lapidus A."/>
            <person name="Barry K."/>
            <person name="Detter J.C."/>
            <person name="Glavina del Rio T."/>
            <person name="Hammon N."/>
            <person name="Israni S."/>
            <person name="Pitluck S."/>
            <person name="Chain P."/>
            <person name="Malfatti S."/>
            <person name="Shin M."/>
            <person name="Vergez L."/>
            <person name="Schmutz J."/>
            <person name="Larimer F."/>
            <person name="Land M."/>
            <person name="Hauser L."/>
            <person name="Kyrpides N."/>
            <person name="Kim E."/>
            <person name="LiPuma J.J."/>
            <person name="Gonzalez C.F."/>
            <person name="Konstantinidis K."/>
            <person name="Tiedje J.M."/>
            <person name="Richardson P."/>
        </authorList>
    </citation>
    <scope>NUCLEOTIDE SEQUENCE [LARGE SCALE GENOMIC DNA]</scope>
    <source>
        <strain>HI2424</strain>
    </source>
</reference>
<evidence type="ECO:0000255" key="1">
    <source>
        <dbReference type="HAMAP-Rule" id="MF_00334"/>
    </source>
</evidence>
<accession>A0K4Z6</accession>
<name>HGD_BURCH</name>
<keyword id="KW-0223">Dioxygenase</keyword>
<keyword id="KW-0408">Iron</keyword>
<keyword id="KW-0479">Metal-binding</keyword>
<keyword id="KW-0560">Oxidoreductase</keyword>
<keyword id="KW-0585">Phenylalanine catabolism</keyword>
<keyword id="KW-0828">Tyrosine catabolism</keyword>
<comment type="function">
    <text evidence="1">Involved in the catabolism of homogentisate (2,5-dihydroxyphenylacetate or 2,5-OH-PhAc), a central intermediate in the degradation of phenylalanine and tyrosine. Catalyzes the oxidative ring cleavage of the aromatic ring of homogentisate to yield maleylacetoacetate.</text>
</comment>
<comment type="catalytic activity">
    <reaction evidence="1">
        <text>homogentisate + O2 = 4-maleylacetoacetate + H(+)</text>
        <dbReference type="Rhea" id="RHEA:15449"/>
        <dbReference type="ChEBI" id="CHEBI:15378"/>
        <dbReference type="ChEBI" id="CHEBI:15379"/>
        <dbReference type="ChEBI" id="CHEBI:16169"/>
        <dbReference type="ChEBI" id="CHEBI:17105"/>
        <dbReference type="EC" id="1.13.11.5"/>
    </reaction>
</comment>
<comment type="cofactor">
    <cofactor evidence="1">
        <name>Fe cation</name>
        <dbReference type="ChEBI" id="CHEBI:24875"/>
    </cofactor>
</comment>
<comment type="pathway">
    <text evidence="1">Amino-acid degradation; L-phenylalanine degradation; acetoacetate and fumarate from L-phenylalanine: step 4/6.</text>
</comment>
<comment type="subunit">
    <text evidence="1">Hexamer; dimer of trimers.</text>
</comment>
<comment type="similarity">
    <text evidence="1">Belongs to the homogentisate dioxygenase family.</text>
</comment>
<proteinExistence type="inferred from homology"/>
<organism>
    <name type="scientific">Burkholderia cenocepacia (strain HI2424)</name>
    <dbReference type="NCBI Taxonomy" id="331272"/>
    <lineage>
        <taxon>Bacteria</taxon>
        <taxon>Pseudomonadati</taxon>
        <taxon>Pseudomonadota</taxon>
        <taxon>Betaproteobacteria</taxon>
        <taxon>Burkholderiales</taxon>
        <taxon>Burkholderiaceae</taxon>
        <taxon>Burkholderia</taxon>
        <taxon>Burkholderia cepacia complex</taxon>
    </lineage>
</organism>
<dbReference type="EC" id="1.13.11.5" evidence="1"/>
<dbReference type="EMBL" id="CP000458">
    <property type="protein sequence ID" value="ABK07573.1"/>
    <property type="molecule type" value="Genomic_DNA"/>
</dbReference>
<dbReference type="RefSeq" id="WP_011544695.1">
    <property type="nucleotide sequence ID" value="NC_008542.1"/>
</dbReference>
<dbReference type="SMR" id="A0K4Z6"/>
<dbReference type="KEGG" id="bch:Bcen2424_0820"/>
<dbReference type="HOGENOM" id="CLU_027174_0_0_4"/>
<dbReference type="UniPathway" id="UPA00139">
    <property type="reaction ID" value="UER00339"/>
</dbReference>
<dbReference type="GO" id="GO:0005737">
    <property type="term" value="C:cytoplasm"/>
    <property type="evidence" value="ECO:0007669"/>
    <property type="project" value="TreeGrafter"/>
</dbReference>
<dbReference type="GO" id="GO:0004411">
    <property type="term" value="F:homogentisate 1,2-dioxygenase activity"/>
    <property type="evidence" value="ECO:0007669"/>
    <property type="project" value="UniProtKB-UniRule"/>
</dbReference>
<dbReference type="GO" id="GO:0005506">
    <property type="term" value="F:iron ion binding"/>
    <property type="evidence" value="ECO:0007669"/>
    <property type="project" value="UniProtKB-UniRule"/>
</dbReference>
<dbReference type="GO" id="GO:0006559">
    <property type="term" value="P:L-phenylalanine catabolic process"/>
    <property type="evidence" value="ECO:0007669"/>
    <property type="project" value="UniProtKB-UniRule"/>
</dbReference>
<dbReference type="GO" id="GO:0006572">
    <property type="term" value="P:tyrosine catabolic process"/>
    <property type="evidence" value="ECO:0007669"/>
    <property type="project" value="UniProtKB-UniRule"/>
</dbReference>
<dbReference type="CDD" id="cd07000">
    <property type="entry name" value="cupin_HGO_N"/>
    <property type="match status" value="1"/>
</dbReference>
<dbReference type="FunFam" id="2.60.120.10:FF:000034">
    <property type="entry name" value="Homogentisate 1,2-dioxygenase"/>
    <property type="match status" value="1"/>
</dbReference>
<dbReference type="Gene3D" id="2.60.120.10">
    <property type="entry name" value="Jelly Rolls"/>
    <property type="match status" value="1"/>
</dbReference>
<dbReference type="HAMAP" id="MF_00334">
    <property type="entry name" value="Homogentis_dioxygen"/>
    <property type="match status" value="1"/>
</dbReference>
<dbReference type="InterPro" id="IPR046451">
    <property type="entry name" value="HgmA_C"/>
</dbReference>
<dbReference type="InterPro" id="IPR046452">
    <property type="entry name" value="HgmA_N"/>
</dbReference>
<dbReference type="InterPro" id="IPR005708">
    <property type="entry name" value="Homogentis_dOase"/>
</dbReference>
<dbReference type="InterPro" id="IPR022950">
    <property type="entry name" value="Homogentis_dOase_bac"/>
</dbReference>
<dbReference type="InterPro" id="IPR014710">
    <property type="entry name" value="RmlC-like_jellyroll"/>
</dbReference>
<dbReference type="InterPro" id="IPR011051">
    <property type="entry name" value="RmlC_Cupin_sf"/>
</dbReference>
<dbReference type="NCBIfam" id="TIGR01015">
    <property type="entry name" value="hmgA"/>
    <property type="match status" value="1"/>
</dbReference>
<dbReference type="PANTHER" id="PTHR11056">
    <property type="entry name" value="HOMOGENTISATE 1,2-DIOXYGENASE"/>
    <property type="match status" value="1"/>
</dbReference>
<dbReference type="PANTHER" id="PTHR11056:SF0">
    <property type="entry name" value="HOMOGENTISATE 1,2-DIOXYGENASE"/>
    <property type="match status" value="1"/>
</dbReference>
<dbReference type="Pfam" id="PF04209">
    <property type="entry name" value="HgmA_C"/>
    <property type="match status" value="1"/>
</dbReference>
<dbReference type="Pfam" id="PF20510">
    <property type="entry name" value="HgmA_N"/>
    <property type="match status" value="1"/>
</dbReference>
<dbReference type="SUPFAM" id="SSF51182">
    <property type="entry name" value="RmlC-like cupins"/>
    <property type="match status" value="1"/>
</dbReference>
<protein>
    <recommendedName>
        <fullName evidence="1">Homogentisate 1,2-dioxygenase</fullName>
        <shortName evidence="1">HGDO</shortName>
        <ecNumber evidence="1">1.13.11.5</ecNumber>
    </recommendedName>
    <alternativeName>
        <fullName evidence="1">Homogentisate oxygenase</fullName>
    </alternativeName>
    <alternativeName>
        <fullName evidence="1">Homogentisic acid oxidase</fullName>
    </alternativeName>
    <alternativeName>
        <fullName evidence="1">Homogentisicase</fullName>
    </alternativeName>
</protein>
<gene>
    <name evidence="1" type="primary">hmgA</name>
    <name type="ordered locus">Bcen2424_0820</name>
</gene>